<gene>
    <name evidence="1" type="primary">add</name>
    <name type="ordered locus">Spea_3392</name>
</gene>
<name>ADD_SHEPA</name>
<protein>
    <recommendedName>
        <fullName evidence="1">Adenosine deaminase</fullName>
        <ecNumber evidence="1">3.5.4.4</ecNumber>
    </recommendedName>
    <alternativeName>
        <fullName evidence="1">Adenosine aminohydrolase</fullName>
    </alternativeName>
</protein>
<sequence>MNYLQLPKIDLHCHLDGSVRPQTVIDLAKLQDVTIPSFNVDDIKALMVAPASCPNLDEYLTRFALPVSVMQTEAALERISFELFEDAAKENVKYLEVRFGPQLHQKMSLNFEQIIGSVVKGMRRAEAQYDIKGNYILSIIKVLPKDDINDVIDAGAKFLNNGVVAFDLAASEEPGFCHEYIPYAKYALEKGYRITIHAGEQGVGQNVYDAISLLGAERIGHGIHINSHQQAYELVKTEAVALETCPSSNVQTKAVESIESHPFGDFYRDGLLVTINTDNRTVSDTTMTKELQLAAEKFNLTEADYFAIYKMSVDNAFTSDEVKLSLLKFID</sequence>
<accession>A8H819</accession>
<feature type="chain" id="PRO_1000081933" description="Adenosine deaminase">
    <location>
        <begin position="1"/>
        <end position="331"/>
    </location>
</feature>
<feature type="active site" description="Proton donor" evidence="1">
    <location>
        <position position="200"/>
    </location>
</feature>
<feature type="binding site" evidence="1">
    <location>
        <position position="12"/>
    </location>
    <ligand>
        <name>Zn(2+)</name>
        <dbReference type="ChEBI" id="CHEBI:29105"/>
        <note>catalytic</note>
    </ligand>
</feature>
<feature type="binding site" evidence="1">
    <location>
        <position position="14"/>
    </location>
    <ligand>
        <name>substrate</name>
    </ligand>
</feature>
<feature type="binding site" evidence="1">
    <location>
        <position position="14"/>
    </location>
    <ligand>
        <name>Zn(2+)</name>
        <dbReference type="ChEBI" id="CHEBI:29105"/>
        <note>catalytic</note>
    </ligand>
</feature>
<feature type="binding site" evidence="1">
    <location>
        <position position="16"/>
    </location>
    <ligand>
        <name>substrate</name>
    </ligand>
</feature>
<feature type="binding site" evidence="1">
    <location>
        <position position="197"/>
    </location>
    <ligand>
        <name>Zn(2+)</name>
        <dbReference type="ChEBI" id="CHEBI:29105"/>
        <note>catalytic</note>
    </ligand>
</feature>
<feature type="binding site" evidence="1">
    <location>
        <position position="278"/>
    </location>
    <ligand>
        <name>Zn(2+)</name>
        <dbReference type="ChEBI" id="CHEBI:29105"/>
        <note>catalytic</note>
    </ligand>
</feature>
<feature type="site" description="Important for catalytic activity" evidence="1">
    <location>
        <position position="221"/>
    </location>
</feature>
<keyword id="KW-0378">Hydrolase</keyword>
<keyword id="KW-0479">Metal-binding</keyword>
<keyword id="KW-0546">Nucleotide metabolism</keyword>
<keyword id="KW-1185">Reference proteome</keyword>
<keyword id="KW-0862">Zinc</keyword>
<comment type="function">
    <text evidence="1">Catalyzes the hydrolytic deamination of adenosine and 2-deoxyadenosine.</text>
</comment>
<comment type="catalytic activity">
    <reaction evidence="1">
        <text>adenosine + H2O + H(+) = inosine + NH4(+)</text>
        <dbReference type="Rhea" id="RHEA:24408"/>
        <dbReference type="ChEBI" id="CHEBI:15377"/>
        <dbReference type="ChEBI" id="CHEBI:15378"/>
        <dbReference type="ChEBI" id="CHEBI:16335"/>
        <dbReference type="ChEBI" id="CHEBI:17596"/>
        <dbReference type="ChEBI" id="CHEBI:28938"/>
        <dbReference type="EC" id="3.5.4.4"/>
    </reaction>
    <physiologicalReaction direction="left-to-right" evidence="1">
        <dbReference type="Rhea" id="RHEA:24409"/>
    </physiologicalReaction>
</comment>
<comment type="catalytic activity">
    <reaction evidence="1">
        <text>2'-deoxyadenosine + H2O + H(+) = 2'-deoxyinosine + NH4(+)</text>
        <dbReference type="Rhea" id="RHEA:28190"/>
        <dbReference type="ChEBI" id="CHEBI:15377"/>
        <dbReference type="ChEBI" id="CHEBI:15378"/>
        <dbReference type="ChEBI" id="CHEBI:17256"/>
        <dbReference type="ChEBI" id="CHEBI:28938"/>
        <dbReference type="ChEBI" id="CHEBI:28997"/>
        <dbReference type="EC" id="3.5.4.4"/>
    </reaction>
    <physiologicalReaction direction="left-to-right" evidence="1">
        <dbReference type="Rhea" id="RHEA:28191"/>
    </physiologicalReaction>
</comment>
<comment type="cofactor">
    <cofactor evidence="1">
        <name>Zn(2+)</name>
        <dbReference type="ChEBI" id="CHEBI:29105"/>
    </cofactor>
    <text evidence="1">Binds 1 zinc ion per subunit.</text>
</comment>
<comment type="similarity">
    <text evidence="1">Belongs to the metallo-dependent hydrolases superfamily. Adenosine and AMP deaminases family. Adenosine deaminase subfamily.</text>
</comment>
<dbReference type="EC" id="3.5.4.4" evidence="1"/>
<dbReference type="EMBL" id="CP000851">
    <property type="protein sequence ID" value="ABV88706.1"/>
    <property type="molecule type" value="Genomic_DNA"/>
</dbReference>
<dbReference type="RefSeq" id="WP_012156605.1">
    <property type="nucleotide sequence ID" value="NC_009901.1"/>
</dbReference>
<dbReference type="SMR" id="A8H819"/>
<dbReference type="STRING" id="398579.Spea_3392"/>
<dbReference type="KEGG" id="spl:Spea_3392"/>
<dbReference type="eggNOG" id="COG1816">
    <property type="taxonomic scope" value="Bacteria"/>
</dbReference>
<dbReference type="HOGENOM" id="CLU_039228_0_0_6"/>
<dbReference type="OrthoDB" id="105475at2"/>
<dbReference type="Proteomes" id="UP000002608">
    <property type="component" value="Chromosome"/>
</dbReference>
<dbReference type="GO" id="GO:0005829">
    <property type="term" value="C:cytosol"/>
    <property type="evidence" value="ECO:0007669"/>
    <property type="project" value="TreeGrafter"/>
</dbReference>
<dbReference type="GO" id="GO:0046936">
    <property type="term" value="F:2'-deoxyadenosine deaminase activity"/>
    <property type="evidence" value="ECO:0007669"/>
    <property type="project" value="RHEA"/>
</dbReference>
<dbReference type="GO" id="GO:0004000">
    <property type="term" value="F:adenosine deaminase activity"/>
    <property type="evidence" value="ECO:0007669"/>
    <property type="project" value="UniProtKB-UniRule"/>
</dbReference>
<dbReference type="GO" id="GO:0008270">
    <property type="term" value="F:zinc ion binding"/>
    <property type="evidence" value="ECO:0007669"/>
    <property type="project" value="UniProtKB-UniRule"/>
</dbReference>
<dbReference type="GO" id="GO:0006154">
    <property type="term" value="P:adenosine catabolic process"/>
    <property type="evidence" value="ECO:0007669"/>
    <property type="project" value="TreeGrafter"/>
</dbReference>
<dbReference type="GO" id="GO:0043103">
    <property type="term" value="P:hypoxanthine salvage"/>
    <property type="evidence" value="ECO:0007669"/>
    <property type="project" value="TreeGrafter"/>
</dbReference>
<dbReference type="GO" id="GO:0046103">
    <property type="term" value="P:inosine biosynthetic process"/>
    <property type="evidence" value="ECO:0007669"/>
    <property type="project" value="TreeGrafter"/>
</dbReference>
<dbReference type="GO" id="GO:0009117">
    <property type="term" value="P:nucleotide metabolic process"/>
    <property type="evidence" value="ECO:0007669"/>
    <property type="project" value="UniProtKB-KW"/>
</dbReference>
<dbReference type="GO" id="GO:0009168">
    <property type="term" value="P:purine ribonucleoside monophosphate biosynthetic process"/>
    <property type="evidence" value="ECO:0007669"/>
    <property type="project" value="UniProtKB-UniRule"/>
</dbReference>
<dbReference type="CDD" id="cd01320">
    <property type="entry name" value="ADA"/>
    <property type="match status" value="1"/>
</dbReference>
<dbReference type="Gene3D" id="3.20.20.140">
    <property type="entry name" value="Metal-dependent hydrolases"/>
    <property type="match status" value="1"/>
</dbReference>
<dbReference type="HAMAP" id="MF_00540">
    <property type="entry name" value="A_deaminase"/>
    <property type="match status" value="1"/>
</dbReference>
<dbReference type="InterPro" id="IPR028893">
    <property type="entry name" value="A_deaminase"/>
</dbReference>
<dbReference type="InterPro" id="IPR001365">
    <property type="entry name" value="A_deaminase_dom"/>
</dbReference>
<dbReference type="InterPro" id="IPR006330">
    <property type="entry name" value="Ado/ade_deaminase"/>
</dbReference>
<dbReference type="InterPro" id="IPR032466">
    <property type="entry name" value="Metal_Hydrolase"/>
</dbReference>
<dbReference type="NCBIfam" id="TIGR01430">
    <property type="entry name" value="aden_deam"/>
    <property type="match status" value="1"/>
</dbReference>
<dbReference type="PANTHER" id="PTHR11409">
    <property type="entry name" value="ADENOSINE DEAMINASE"/>
    <property type="match status" value="1"/>
</dbReference>
<dbReference type="PANTHER" id="PTHR11409:SF43">
    <property type="entry name" value="ADENOSINE DEAMINASE"/>
    <property type="match status" value="1"/>
</dbReference>
<dbReference type="Pfam" id="PF00962">
    <property type="entry name" value="A_deaminase"/>
    <property type="match status" value="1"/>
</dbReference>
<dbReference type="SUPFAM" id="SSF51556">
    <property type="entry name" value="Metallo-dependent hydrolases"/>
    <property type="match status" value="1"/>
</dbReference>
<organism>
    <name type="scientific">Shewanella pealeana (strain ATCC 700345 / ANG-SQ1)</name>
    <dbReference type="NCBI Taxonomy" id="398579"/>
    <lineage>
        <taxon>Bacteria</taxon>
        <taxon>Pseudomonadati</taxon>
        <taxon>Pseudomonadota</taxon>
        <taxon>Gammaproteobacteria</taxon>
        <taxon>Alteromonadales</taxon>
        <taxon>Shewanellaceae</taxon>
        <taxon>Shewanella</taxon>
    </lineage>
</organism>
<reference key="1">
    <citation type="submission" date="2007-10" db="EMBL/GenBank/DDBJ databases">
        <title>Complete sequence of Shewanella pealeana ATCC 700345.</title>
        <authorList>
            <consortium name="US DOE Joint Genome Institute"/>
            <person name="Copeland A."/>
            <person name="Lucas S."/>
            <person name="Lapidus A."/>
            <person name="Barry K."/>
            <person name="Glavina del Rio T."/>
            <person name="Dalin E."/>
            <person name="Tice H."/>
            <person name="Pitluck S."/>
            <person name="Chertkov O."/>
            <person name="Brettin T."/>
            <person name="Bruce D."/>
            <person name="Detter J.C."/>
            <person name="Han C."/>
            <person name="Schmutz J."/>
            <person name="Larimer F."/>
            <person name="Land M."/>
            <person name="Hauser L."/>
            <person name="Kyrpides N."/>
            <person name="Kim E."/>
            <person name="Zhao J.-S.Z."/>
            <person name="Manno D."/>
            <person name="Hawari J."/>
            <person name="Richardson P."/>
        </authorList>
    </citation>
    <scope>NUCLEOTIDE SEQUENCE [LARGE SCALE GENOMIC DNA]</scope>
    <source>
        <strain>ATCC 700345 / ANG-SQ1</strain>
    </source>
</reference>
<evidence type="ECO:0000255" key="1">
    <source>
        <dbReference type="HAMAP-Rule" id="MF_00540"/>
    </source>
</evidence>
<proteinExistence type="inferred from homology"/>